<feature type="chain" id="PRO_0000351313" description="Autoinducer 2 import ATP-binding protein LsrA">
    <location>
        <begin position="1"/>
        <end position="527"/>
    </location>
</feature>
<feature type="domain" description="ABC transporter 1" evidence="2">
    <location>
        <begin position="12"/>
        <end position="240"/>
    </location>
</feature>
<feature type="domain" description="ABC transporter 2" evidence="2">
    <location>
        <begin position="266"/>
        <end position="506"/>
    </location>
</feature>
<feature type="region of interest" description="Disordered" evidence="3">
    <location>
        <begin position="507"/>
        <end position="527"/>
    </location>
</feature>
<feature type="compositionally biased region" description="Polar residues" evidence="3">
    <location>
        <begin position="510"/>
        <end position="527"/>
    </location>
</feature>
<feature type="binding site" evidence="2">
    <location>
        <begin position="44"/>
        <end position="51"/>
    </location>
    <ligand>
        <name>ATP</name>
        <dbReference type="ChEBI" id="CHEBI:30616"/>
    </ligand>
</feature>
<accession>Q66EY9</accession>
<protein>
    <recommendedName>
        <fullName evidence="1">Autoinducer 2 import ATP-binding protein LsrA</fullName>
        <shortName evidence="1">AI-2 import ATP-binding protein LsrA</shortName>
        <ecNumber evidence="1">7.6.2.13</ecNumber>
    </recommendedName>
</protein>
<comment type="function">
    <text evidence="1">Part of the ABC transporter complex LsrABCD involved in autoinducer 2 (AI-2) import. Responsible for energy coupling to the transport system.</text>
</comment>
<comment type="catalytic activity">
    <reaction evidence="1">
        <text>ATP + H2O + (2R,4S)-2-methyl-2,3,3,4-tetrahydroxytetrahydrofuran-[AI-2-binding protein]Side 1 = ADP + phosphate + (2R,4S)-2-methyl-2,3,3,4-tetrahydroxytetrahydrofuranSide 2 + [AI-2-binding protein]Side 1.</text>
        <dbReference type="EC" id="7.6.2.13"/>
    </reaction>
</comment>
<comment type="subunit">
    <text evidence="1">The complex is composed of two ATP-binding proteins (LsrA), two transmembrane proteins (LsrC and LsrD) and a solute-binding protein (LsrB).</text>
</comment>
<comment type="subcellular location">
    <subcellularLocation>
        <location evidence="1">Cell inner membrane</location>
        <topology evidence="1">Peripheral membrane protein</topology>
    </subcellularLocation>
</comment>
<comment type="similarity">
    <text evidence="4">Belongs to the ABC transporter superfamily. AI-2 autoinducer porter (TC 3.A.1.2.8) family.</text>
</comment>
<reference key="1">
    <citation type="journal article" date="2004" name="Proc. Natl. Acad. Sci. U.S.A.">
        <title>Insights into the evolution of Yersinia pestis through whole-genome comparison with Yersinia pseudotuberculosis.</title>
        <authorList>
            <person name="Chain P.S.G."/>
            <person name="Carniel E."/>
            <person name="Larimer F.W."/>
            <person name="Lamerdin J."/>
            <person name="Stoutland P.O."/>
            <person name="Regala W.M."/>
            <person name="Georgescu A.M."/>
            <person name="Vergez L.M."/>
            <person name="Land M.L."/>
            <person name="Motin V.L."/>
            <person name="Brubaker R.R."/>
            <person name="Fowler J."/>
            <person name="Hinnebusch J."/>
            <person name="Marceau M."/>
            <person name="Medigue C."/>
            <person name="Simonet M."/>
            <person name="Chenal-Francisque V."/>
            <person name="Souza B."/>
            <person name="Dacheux D."/>
            <person name="Elliott J.M."/>
            <person name="Derbise A."/>
            <person name="Hauser L.J."/>
            <person name="Garcia E."/>
        </authorList>
    </citation>
    <scope>NUCLEOTIDE SEQUENCE [LARGE SCALE GENOMIC DNA]</scope>
    <source>
        <strain>IP32953</strain>
    </source>
</reference>
<proteinExistence type="inferred from homology"/>
<organism>
    <name type="scientific">Yersinia pseudotuberculosis serotype I (strain IP32953)</name>
    <dbReference type="NCBI Taxonomy" id="273123"/>
    <lineage>
        <taxon>Bacteria</taxon>
        <taxon>Pseudomonadati</taxon>
        <taxon>Pseudomonadota</taxon>
        <taxon>Gammaproteobacteria</taxon>
        <taxon>Enterobacterales</taxon>
        <taxon>Yersiniaceae</taxon>
        <taxon>Yersinia</taxon>
    </lineage>
</organism>
<keyword id="KW-0067">ATP-binding</keyword>
<keyword id="KW-0997">Cell inner membrane</keyword>
<keyword id="KW-1003">Cell membrane</keyword>
<keyword id="KW-0472">Membrane</keyword>
<keyword id="KW-0547">Nucleotide-binding</keyword>
<keyword id="KW-0677">Repeat</keyword>
<keyword id="KW-1278">Translocase</keyword>
<keyword id="KW-0813">Transport</keyword>
<name>LSRA_YERPS</name>
<evidence type="ECO:0000250" key="1">
    <source>
        <dbReference type="UniProtKB" id="P77257"/>
    </source>
</evidence>
<evidence type="ECO:0000255" key="2">
    <source>
        <dbReference type="PROSITE-ProRule" id="PRU00434"/>
    </source>
</evidence>
<evidence type="ECO:0000256" key="3">
    <source>
        <dbReference type="SAM" id="MobiDB-lite"/>
    </source>
</evidence>
<evidence type="ECO:0000305" key="4"/>
<dbReference type="EC" id="7.6.2.13" evidence="1"/>
<dbReference type="EMBL" id="BX936398">
    <property type="protein sequence ID" value="CAH19792.1"/>
    <property type="molecule type" value="Genomic_DNA"/>
</dbReference>
<dbReference type="RefSeq" id="WP_011191665.1">
    <property type="nucleotide sequence ID" value="NC_006155.1"/>
</dbReference>
<dbReference type="SMR" id="Q66EY9"/>
<dbReference type="KEGG" id="ypo:BZ17_2007"/>
<dbReference type="KEGG" id="yps:YPTB0552"/>
<dbReference type="PATRIC" id="fig|273123.14.peg.2133"/>
<dbReference type="Proteomes" id="UP000001011">
    <property type="component" value="Chromosome"/>
</dbReference>
<dbReference type="GO" id="GO:0005886">
    <property type="term" value="C:plasma membrane"/>
    <property type="evidence" value="ECO:0007669"/>
    <property type="project" value="UniProtKB-SubCell"/>
</dbReference>
<dbReference type="GO" id="GO:0005524">
    <property type="term" value="F:ATP binding"/>
    <property type="evidence" value="ECO:0007669"/>
    <property type="project" value="UniProtKB-KW"/>
</dbReference>
<dbReference type="GO" id="GO:0016887">
    <property type="term" value="F:ATP hydrolysis activity"/>
    <property type="evidence" value="ECO:0007669"/>
    <property type="project" value="InterPro"/>
</dbReference>
<dbReference type="CDD" id="cd03216">
    <property type="entry name" value="ABC_Carb_Monos_I"/>
    <property type="match status" value="1"/>
</dbReference>
<dbReference type="CDD" id="cd03215">
    <property type="entry name" value="ABC_Carb_Monos_II"/>
    <property type="match status" value="1"/>
</dbReference>
<dbReference type="Gene3D" id="3.40.50.300">
    <property type="entry name" value="P-loop containing nucleotide triphosphate hydrolases"/>
    <property type="match status" value="2"/>
</dbReference>
<dbReference type="InterPro" id="IPR003593">
    <property type="entry name" value="AAA+_ATPase"/>
</dbReference>
<dbReference type="InterPro" id="IPR050107">
    <property type="entry name" value="ABC_carbohydrate_import_ATPase"/>
</dbReference>
<dbReference type="InterPro" id="IPR003439">
    <property type="entry name" value="ABC_transporter-like_ATP-bd"/>
</dbReference>
<dbReference type="InterPro" id="IPR017871">
    <property type="entry name" value="ABC_transporter-like_CS"/>
</dbReference>
<dbReference type="InterPro" id="IPR027417">
    <property type="entry name" value="P-loop_NTPase"/>
</dbReference>
<dbReference type="NCBIfam" id="NF011967">
    <property type="entry name" value="PRK15439.1"/>
    <property type="match status" value="1"/>
</dbReference>
<dbReference type="PANTHER" id="PTHR43790:SF2">
    <property type="entry name" value="AUTOINDUCER 2 IMPORT ATP-BINDING PROTEIN LSRA"/>
    <property type="match status" value="1"/>
</dbReference>
<dbReference type="PANTHER" id="PTHR43790">
    <property type="entry name" value="CARBOHYDRATE TRANSPORT ATP-BINDING PROTEIN MG119-RELATED"/>
    <property type="match status" value="1"/>
</dbReference>
<dbReference type="Pfam" id="PF00005">
    <property type="entry name" value="ABC_tran"/>
    <property type="match status" value="2"/>
</dbReference>
<dbReference type="SMART" id="SM00382">
    <property type="entry name" value="AAA"/>
    <property type="match status" value="2"/>
</dbReference>
<dbReference type="SUPFAM" id="SSF52540">
    <property type="entry name" value="P-loop containing nucleoside triphosphate hydrolases"/>
    <property type="match status" value="2"/>
</dbReference>
<dbReference type="PROSITE" id="PS00211">
    <property type="entry name" value="ABC_TRANSPORTER_1"/>
    <property type="match status" value="1"/>
</dbReference>
<dbReference type="PROSITE" id="PS50893">
    <property type="entry name" value="ABC_TRANSPORTER_2"/>
    <property type="match status" value="2"/>
</dbReference>
<gene>
    <name type="primary">lsrA</name>
    <name type="ordered locus">YPTB0552</name>
</gene>
<sequence length="527" mass="57089">MPHTVATPPPLLQVRGISKQFSGVVVLKSIDFTLQPGQVHALLGGNGAGKSTLMKIIAGILPPDTGVIEMNGQPCFNLTPAKAHQLGIYLVPQEPMLFANLSVQENILFRLPKHQADKKKMAQLLKNLGCHLDLSVSAGSLEVADQQLVEIMRGLMRDSRILILDEPTASLTPAETHRLFSQIRMLLQQGVGVVFISHKLPEIRQLADWVSVMRDGGIALSGSTADFSTEDMIQAMTPEAQKGALTDSQKLWLELPGNRRAQSRAQSQQPVIHVHDLSGEGFAHISFHVQAGEILGLAGVVGAGRTELAETLYGLRPASTGNVILEEVNITAMKTANRLAAGLVYLPEDRQASGLYLDAPLSWNVCALAHDRQGLWTQPAQEAAVLERYRRALNIKFSHLEQPVRTLSGGNQQKLLIAKCLEANPLLLIIDEPTRGVDVSARSDIYQLIRSIAEQQVAIIFISSDLEEVVQMADRVLVMHQGEINGALSGAAMNVDTIMHMAFGEHRSVSEPQSGTASSAENKGTSC</sequence>